<reference key="1">
    <citation type="submission" date="2000-06" db="EMBL/GenBank/DDBJ databases">
        <authorList>
            <person name="Mashima H."/>
            <person name="Kojima I."/>
        </authorList>
    </citation>
    <scope>NUCLEOTIDE SEQUENCE [MRNA]</scope>
    <source>
        <strain>Sprague-Dawley</strain>
    </source>
</reference>
<reference key="2">
    <citation type="journal article" date="2004" name="Nature">
        <title>Genome sequence of the Brown Norway rat yields insights into mammalian evolution.</title>
        <authorList>
            <person name="Gibbs R.A."/>
            <person name="Weinstock G.M."/>
            <person name="Metzker M.L."/>
            <person name="Muzny D.M."/>
            <person name="Sodergren E.J."/>
            <person name="Scherer S."/>
            <person name="Scott G."/>
            <person name="Steffen D."/>
            <person name="Worley K.C."/>
            <person name="Burch P.E."/>
            <person name="Okwuonu G."/>
            <person name="Hines S."/>
            <person name="Lewis L."/>
            <person name="Deramo C."/>
            <person name="Delgado O."/>
            <person name="Dugan-Rocha S."/>
            <person name="Miner G."/>
            <person name="Morgan M."/>
            <person name="Hawes A."/>
            <person name="Gill R."/>
            <person name="Holt R.A."/>
            <person name="Adams M.D."/>
            <person name="Amanatides P.G."/>
            <person name="Baden-Tillson H."/>
            <person name="Barnstead M."/>
            <person name="Chin S."/>
            <person name="Evans C.A."/>
            <person name="Ferriera S."/>
            <person name="Fosler C."/>
            <person name="Glodek A."/>
            <person name="Gu Z."/>
            <person name="Jennings D."/>
            <person name="Kraft C.L."/>
            <person name="Nguyen T."/>
            <person name="Pfannkoch C.M."/>
            <person name="Sitter C."/>
            <person name="Sutton G.G."/>
            <person name="Venter J.C."/>
            <person name="Woodage T."/>
            <person name="Smith D."/>
            <person name="Lee H.-M."/>
            <person name="Gustafson E."/>
            <person name="Cahill P."/>
            <person name="Kana A."/>
            <person name="Doucette-Stamm L."/>
            <person name="Weinstock K."/>
            <person name="Fechtel K."/>
            <person name="Weiss R.B."/>
            <person name="Dunn D.M."/>
            <person name="Green E.D."/>
            <person name="Blakesley R.W."/>
            <person name="Bouffard G.G."/>
            <person name="De Jong P.J."/>
            <person name="Osoegawa K."/>
            <person name="Zhu B."/>
            <person name="Marra M."/>
            <person name="Schein J."/>
            <person name="Bosdet I."/>
            <person name="Fjell C."/>
            <person name="Jones S."/>
            <person name="Krzywinski M."/>
            <person name="Mathewson C."/>
            <person name="Siddiqui A."/>
            <person name="Wye N."/>
            <person name="McPherson J."/>
            <person name="Zhao S."/>
            <person name="Fraser C.M."/>
            <person name="Shetty J."/>
            <person name="Shatsman S."/>
            <person name="Geer K."/>
            <person name="Chen Y."/>
            <person name="Abramzon S."/>
            <person name="Nierman W.C."/>
            <person name="Havlak P.H."/>
            <person name="Chen R."/>
            <person name="Durbin K.J."/>
            <person name="Egan A."/>
            <person name="Ren Y."/>
            <person name="Song X.-Z."/>
            <person name="Li B."/>
            <person name="Liu Y."/>
            <person name="Qin X."/>
            <person name="Cawley S."/>
            <person name="Cooney A.J."/>
            <person name="D'Souza L.M."/>
            <person name="Martin K."/>
            <person name="Wu J.Q."/>
            <person name="Gonzalez-Garay M.L."/>
            <person name="Jackson A.R."/>
            <person name="Kalafus K.J."/>
            <person name="McLeod M.P."/>
            <person name="Milosavljevic A."/>
            <person name="Virk D."/>
            <person name="Volkov A."/>
            <person name="Wheeler D.A."/>
            <person name="Zhang Z."/>
            <person name="Bailey J.A."/>
            <person name="Eichler E.E."/>
            <person name="Tuzun E."/>
            <person name="Birney E."/>
            <person name="Mongin E."/>
            <person name="Ureta-Vidal A."/>
            <person name="Woodwark C."/>
            <person name="Zdobnov E."/>
            <person name="Bork P."/>
            <person name="Suyama M."/>
            <person name="Torrents D."/>
            <person name="Alexandersson M."/>
            <person name="Trask B.J."/>
            <person name="Young J.M."/>
            <person name="Huang H."/>
            <person name="Wang H."/>
            <person name="Xing H."/>
            <person name="Daniels S."/>
            <person name="Gietzen D."/>
            <person name="Schmidt J."/>
            <person name="Stevens K."/>
            <person name="Vitt U."/>
            <person name="Wingrove J."/>
            <person name="Camara F."/>
            <person name="Mar Alba M."/>
            <person name="Abril J.F."/>
            <person name="Guigo R."/>
            <person name="Smit A."/>
            <person name="Dubchak I."/>
            <person name="Rubin E.M."/>
            <person name="Couronne O."/>
            <person name="Poliakov A."/>
            <person name="Huebner N."/>
            <person name="Ganten D."/>
            <person name="Goesele C."/>
            <person name="Hummel O."/>
            <person name="Kreitler T."/>
            <person name="Lee Y.-A."/>
            <person name="Monti J."/>
            <person name="Schulz H."/>
            <person name="Zimdahl H."/>
            <person name="Himmelbauer H."/>
            <person name="Lehrach H."/>
            <person name="Jacob H.J."/>
            <person name="Bromberg S."/>
            <person name="Gullings-Handley J."/>
            <person name="Jensen-Seaman M.I."/>
            <person name="Kwitek A.E."/>
            <person name="Lazar J."/>
            <person name="Pasko D."/>
            <person name="Tonellato P.J."/>
            <person name="Twigger S."/>
            <person name="Ponting C.P."/>
            <person name="Duarte J.M."/>
            <person name="Rice S."/>
            <person name="Goodstadt L."/>
            <person name="Beatson S.A."/>
            <person name="Emes R.D."/>
            <person name="Winter E.E."/>
            <person name="Webber C."/>
            <person name="Brandt P."/>
            <person name="Nyakatura G."/>
            <person name="Adetobi M."/>
            <person name="Chiaromonte F."/>
            <person name="Elnitski L."/>
            <person name="Eswara P."/>
            <person name="Hardison R.C."/>
            <person name="Hou M."/>
            <person name="Kolbe D."/>
            <person name="Makova K."/>
            <person name="Miller W."/>
            <person name="Nekrutenko A."/>
            <person name="Riemer C."/>
            <person name="Schwartz S."/>
            <person name="Taylor J."/>
            <person name="Yang S."/>
            <person name="Zhang Y."/>
            <person name="Lindpaintner K."/>
            <person name="Andrews T.D."/>
            <person name="Caccamo M."/>
            <person name="Clamp M."/>
            <person name="Clarke L."/>
            <person name="Curwen V."/>
            <person name="Durbin R.M."/>
            <person name="Eyras E."/>
            <person name="Searle S.M."/>
            <person name="Cooper G.M."/>
            <person name="Batzoglou S."/>
            <person name="Brudno M."/>
            <person name="Sidow A."/>
            <person name="Stone E.A."/>
            <person name="Payseur B.A."/>
            <person name="Bourque G."/>
            <person name="Lopez-Otin C."/>
            <person name="Puente X.S."/>
            <person name="Chakrabarti K."/>
            <person name="Chatterji S."/>
            <person name="Dewey C."/>
            <person name="Pachter L."/>
            <person name="Bray N."/>
            <person name="Yap V.B."/>
            <person name="Caspi A."/>
            <person name="Tesler G."/>
            <person name="Pevzner P.A."/>
            <person name="Haussler D."/>
            <person name="Roskin K.M."/>
            <person name="Baertsch R."/>
            <person name="Clawson H."/>
            <person name="Furey T.S."/>
            <person name="Hinrichs A.S."/>
            <person name="Karolchik D."/>
            <person name="Kent W.J."/>
            <person name="Rosenbloom K.R."/>
            <person name="Trumbower H."/>
            <person name="Weirauch M."/>
            <person name="Cooper D.N."/>
            <person name="Stenson P.D."/>
            <person name="Ma B."/>
            <person name="Brent M."/>
            <person name="Arumugam M."/>
            <person name="Shteynberg D."/>
            <person name="Copley R.R."/>
            <person name="Taylor M.S."/>
            <person name="Riethman H."/>
            <person name="Mudunuri U."/>
            <person name="Peterson J."/>
            <person name="Guyer M."/>
            <person name="Felsenfeld A."/>
            <person name="Old S."/>
            <person name="Mockrin S."/>
            <person name="Collins F.S."/>
        </authorList>
    </citation>
    <scope>NUCLEOTIDE SEQUENCE [LARGE SCALE GENOMIC DNA]</scope>
    <source>
        <strain>Brown Norway</strain>
    </source>
</reference>
<reference key="3">
    <citation type="submission" date="2005-07" db="EMBL/GenBank/DDBJ databases">
        <authorList>
            <person name="Mural R.J."/>
            <person name="Adams M.D."/>
            <person name="Myers E.W."/>
            <person name="Smith H.O."/>
            <person name="Venter J.C."/>
        </authorList>
    </citation>
    <scope>NUCLEOTIDE SEQUENCE [LARGE SCALE GENOMIC DNA]</scope>
</reference>
<comment type="function">
    <text evidence="1">Mitochondrial serine transporter that mediates transport of serine into mitochondria, an important step of the one-carbon metabolism pathway. Mitochondrial serine is converted to glycine and formate, which then exits to the cytosol where it is used to generate the charged folates that serve as one-carbon donors.</text>
</comment>
<comment type="catalytic activity">
    <reaction evidence="1">
        <text>L-serine(in) = L-serine(out)</text>
        <dbReference type="Rhea" id="RHEA:35031"/>
        <dbReference type="ChEBI" id="CHEBI:33384"/>
    </reaction>
</comment>
<comment type="subcellular location">
    <subcellularLocation>
        <location evidence="1">Mitochondrion membrane</location>
        <topology evidence="2">Multi-pass membrane protein</topology>
    </subcellularLocation>
</comment>
<comment type="similarity">
    <text evidence="3">Belongs to the sideroflexin family.</text>
</comment>
<sequence>MGDLPLNINIQEPRWDQSTFLGRARHFFTVTDPRNLLLSGKQLEASRNIVQNYRAGVVTPGLTEDQLWRAKYVYDSAFHPDTGEKVVLIGRMSAQVPMNMTITGCMLTFYRKTPTMVFWQWVNQSFNAIVNYSNRSGDAPITVQQLGTAYVSATTGAVATALGLKSLTKHLPPLVGRFVPFAAVAAANCINIPLMRQRELQVGIPVTDEAGQRLGHSVTAAKQGIFQVVVSRIGMAIPAMAIPPVIMNTLEKKDFLKRRPWLGAPLQVGLVGFCLVFATPLCCALFPQRSSIHVTRLEPELRAQIQAQKPSIDVVYYNKGL</sequence>
<keyword id="KW-0007">Acetylation</keyword>
<keyword id="KW-0029">Amino-acid transport</keyword>
<keyword id="KW-0472">Membrane</keyword>
<keyword id="KW-0496">Mitochondrion</keyword>
<keyword id="KW-0554">One-carbon metabolism</keyword>
<keyword id="KW-1185">Reference proteome</keyword>
<keyword id="KW-0812">Transmembrane</keyword>
<keyword id="KW-1133">Transmembrane helix</keyword>
<keyword id="KW-0813">Transport</keyword>
<evidence type="ECO:0000250" key="1">
    <source>
        <dbReference type="UniProtKB" id="Q9BWM7"/>
    </source>
</evidence>
<evidence type="ECO:0000255" key="2"/>
<evidence type="ECO:0000305" key="3"/>
<proteinExistence type="evidence at transcript level"/>
<name>SFXN3_RAT</name>
<accession>Q9JHY2</accession>
<accession>G3V804</accession>
<dbReference type="EMBL" id="AF276997">
    <property type="protein sequence ID" value="AAF78249.1"/>
    <property type="molecule type" value="mRNA"/>
</dbReference>
<dbReference type="EMBL" id="AC121209">
    <property type="status" value="NOT_ANNOTATED_CDS"/>
    <property type="molecule type" value="Genomic_DNA"/>
</dbReference>
<dbReference type="EMBL" id="CH473986">
    <property type="protein sequence ID" value="EDL94301.1"/>
    <property type="molecule type" value="Genomic_DNA"/>
</dbReference>
<dbReference type="RefSeq" id="NP_075237.1">
    <property type="nucleotide sequence ID" value="NM_022948.1"/>
</dbReference>
<dbReference type="RefSeq" id="XP_006231625.1">
    <property type="nucleotide sequence ID" value="XM_006231563.3"/>
</dbReference>
<dbReference type="RefSeq" id="XP_006231627.1">
    <property type="nucleotide sequence ID" value="XM_006231565.3"/>
</dbReference>
<dbReference type="RefSeq" id="XP_006231628.1">
    <property type="nucleotide sequence ID" value="XM_006231566.2"/>
</dbReference>
<dbReference type="RefSeq" id="XP_008758673.1">
    <property type="nucleotide sequence ID" value="XM_008760451.2"/>
</dbReference>
<dbReference type="BioGRID" id="249235">
    <property type="interactions" value="2"/>
</dbReference>
<dbReference type="FunCoup" id="Q9JHY2">
    <property type="interactions" value="793"/>
</dbReference>
<dbReference type="IntAct" id="Q9JHY2">
    <property type="interactions" value="2"/>
</dbReference>
<dbReference type="MINT" id="Q9JHY2"/>
<dbReference type="STRING" id="10116.ENSRNOP00000021171"/>
<dbReference type="CarbonylDB" id="Q9JHY2"/>
<dbReference type="GlyGen" id="Q9JHY2">
    <property type="glycosylation" value="2 sites, 1 O-linked glycan (1 site)"/>
</dbReference>
<dbReference type="iPTMnet" id="Q9JHY2"/>
<dbReference type="PhosphoSitePlus" id="Q9JHY2"/>
<dbReference type="SwissPalm" id="Q9JHY2"/>
<dbReference type="jPOST" id="Q9JHY2"/>
<dbReference type="PaxDb" id="10116-ENSRNOP00000021171"/>
<dbReference type="GeneID" id="65042"/>
<dbReference type="KEGG" id="rno:65042"/>
<dbReference type="UCSC" id="RGD:620716">
    <property type="organism name" value="rat"/>
</dbReference>
<dbReference type="AGR" id="RGD:620716"/>
<dbReference type="CTD" id="81855"/>
<dbReference type="RGD" id="620716">
    <property type="gene designation" value="Sfxn3"/>
</dbReference>
<dbReference type="VEuPathDB" id="HostDB:ENSRNOG00000015442"/>
<dbReference type="eggNOG" id="KOG3767">
    <property type="taxonomic scope" value="Eukaryota"/>
</dbReference>
<dbReference type="HOGENOM" id="CLU_039425_1_0_1"/>
<dbReference type="InParanoid" id="Q9JHY2"/>
<dbReference type="PhylomeDB" id="Q9JHY2"/>
<dbReference type="TreeFam" id="TF313205"/>
<dbReference type="PRO" id="PR:Q9JHY2"/>
<dbReference type="Proteomes" id="UP000002494">
    <property type="component" value="Chromosome 1"/>
</dbReference>
<dbReference type="Proteomes" id="UP000234681">
    <property type="component" value="Chromosome 1"/>
</dbReference>
<dbReference type="Bgee" id="ENSRNOG00000015442">
    <property type="expression patterns" value="Expressed in stomach and 20 other cell types or tissues"/>
</dbReference>
<dbReference type="GO" id="GO:0005743">
    <property type="term" value="C:mitochondrial inner membrane"/>
    <property type="evidence" value="ECO:0000318"/>
    <property type="project" value="GO_Central"/>
</dbReference>
<dbReference type="GO" id="GO:0031966">
    <property type="term" value="C:mitochondrial membrane"/>
    <property type="evidence" value="ECO:0000314"/>
    <property type="project" value="RGD"/>
</dbReference>
<dbReference type="GO" id="GO:0015194">
    <property type="term" value="F:L-serine transmembrane transporter activity"/>
    <property type="evidence" value="ECO:0000250"/>
    <property type="project" value="UniProtKB"/>
</dbReference>
<dbReference type="GO" id="GO:0015075">
    <property type="term" value="F:monoatomic ion transmembrane transporter activity"/>
    <property type="evidence" value="ECO:0007669"/>
    <property type="project" value="InterPro"/>
</dbReference>
<dbReference type="GO" id="GO:0022857">
    <property type="term" value="F:transmembrane transporter activity"/>
    <property type="evidence" value="ECO:0000318"/>
    <property type="project" value="GO_Central"/>
</dbReference>
<dbReference type="GO" id="GO:0005371">
    <property type="term" value="F:tricarboxylate secondary active transmembrane transporter activity"/>
    <property type="evidence" value="ECO:0000304"/>
    <property type="project" value="RGD"/>
</dbReference>
<dbReference type="GO" id="GO:1990542">
    <property type="term" value="P:mitochondrial transmembrane transport"/>
    <property type="evidence" value="ECO:0000250"/>
    <property type="project" value="UniProtKB"/>
</dbReference>
<dbReference type="GO" id="GO:0006730">
    <property type="term" value="P:one-carbon metabolic process"/>
    <property type="evidence" value="ECO:0000250"/>
    <property type="project" value="UniProtKB"/>
</dbReference>
<dbReference type="GO" id="GO:0140300">
    <property type="term" value="P:serine import into mitochondrion"/>
    <property type="evidence" value="ECO:0000250"/>
    <property type="project" value="UniProtKB"/>
</dbReference>
<dbReference type="InterPro" id="IPR004686">
    <property type="entry name" value="Mtc"/>
</dbReference>
<dbReference type="NCBIfam" id="TIGR00798">
    <property type="entry name" value="mtc"/>
    <property type="match status" value="1"/>
</dbReference>
<dbReference type="PANTHER" id="PTHR11153">
    <property type="entry name" value="SIDEROFLEXIN"/>
    <property type="match status" value="1"/>
</dbReference>
<dbReference type="PANTHER" id="PTHR11153:SF20">
    <property type="entry name" value="SIDEROFLEXIN-3"/>
    <property type="match status" value="1"/>
</dbReference>
<dbReference type="Pfam" id="PF03820">
    <property type="entry name" value="SFXNs"/>
    <property type="match status" value="1"/>
</dbReference>
<gene>
    <name type="primary">Sfxn3</name>
</gene>
<feature type="chain" id="PRO_0000177040" description="Sideroflexin-3">
    <location>
        <begin position="1"/>
        <end position="321"/>
    </location>
</feature>
<feature type="transmembrane region" description="Helical" evidence="2">
    <location>
        <begin position="146"/>
        <end position="164"/>
    </location>
</feature>
<feature type="transmembrane region" description="Helical" evidence="2">
    <location>
        <begin position="174"/>
        <end position="194"/>
    </location>
</feature>
<feature type="transmembrane region" description="Helical" evidence="2">
    <location>
        <begin position="225"/>
        <end position="245"/>
    </location>
</feature>
<feature type="transmembrane region" description="Helical" evidence="2">
    <location>
        <begin position="266"/>
        <end position="286"/>
    </location>
</feature>
<feature type="modified residue" description="N-acetylmethionine" evidence="1">
    <location>
        <position position="1"/>
    </location>
</feature>
<feature type="sequence conflict" description="In Ref. 1; AAF78249." evidence="3" ref="1">
    <original>M</original>
    <variation>V</variation>
    <location>
        <position position="116"/>
    </location>
</feature>
<feature type="sequence conflict" description="In Ref. 1; AAF78249." evidence="3" ref="1">
    <original>K</original>
    <variation>N</variation>
    <location>
        <position position="309"/>
    </location>
</feature>
<protein>
    <recommendedName>
        <fullName>Sideroflexin-3</fullName>
    </recommendedName>
</protein>
<organism>
    <name type="scientific">Rattus norvegicus</name>
    <name type="common">Rat</name>
    <dbReference type="NCBI Taxonomy" id="10116"/>
    <lineage>
        <taxon>Eukaryota</taxon>
        <taxon>Metazoa</taxon>
        <taxon>Chordata</taxon>
        <taxon>Craniata</taxon>
        <taxon>Vertebrata</taxon>
        <taxon>Euteleostomi</taxon>
        <taxon>Mammalia</taxon>
        <taxon>Eutheria</taxon>
        <taxon>Euarchontoglires</taxon>
        <taxon>Glires</taxon>
        <taxon>Rodentia</taxon>
        <taxon>Myomorpha</taxon>
        <taxon>Muroidea</taxon>
        <taxon>Muridae</taxon>
        <taxon>Murinae</taxon>
        <taxon>Rattus</taxon>
    </lineage>
</organism>